<accession>A7FDQ3</accession>
<feature type="chain" id="PRO_1000062130" description="Ribosomal protein L11 methyltransferase">
    <location>
        <begin position="1"/>
        <end position="293"/>
    </location>
</feature>
<feature type="binding site" evidence="1">
    <location>
        <position position="145"/>
    </location>
    <ligand>
        <name>S-adenosyl-L-methionine</name>
        <dbReference type="ChEBI" id="CHEBI:59789"/>
    </ligand>
</feature>
<feature type="binding site" evidence="1">
    <location>
        <position position="166"/>
    </location>
    <ligand>
        <name>S-adenosyl-L-methionine</name>
        <dbReference type="ChEBI" id="CHEBI:59789"/>
    </ligand>
</feature>
<feature type="binding site" evidence="1">
    <location>
        <position position="188"/>
    </location>
    <ligand>
        <name>S-adenosyl-L-methionine</name>
        <dbReference type="ChEBI" id="CHEBI:59789"/>
    </ligand>
</feature>
<feature type="binding site" evidence="1">
    <location>
        <position position="230"/>
    </location>
    <ligand>
        <name>S-adenosyl-L-methionine</name>
        <dbReference type="ChEBI" id="CHEBI:59789"/>
    </ligand>
</feature>
<sequence length="293" mass="31848">MPWIQLKLNTTGNQAESLGDVLVESGAVSVTFQDTHDNPVFEPLPGETRLWGDTDVIGLYDAETDMADVVAMLECHPQIGKGFIHKIEQLEDKDWEREWMDNFHPMRFGERLWICPSWRDVPDPTAVNVMLDPGLAFGTGTHPTTALCLQWLDSLDLNGKTLIDFGCGSGILAIAALKLGAARAIGIDIDPQAIQASRDNAQRNGVSERLELYLAKDQPAELSADVVVANILAGPLRELAPLISVLPTTGGHLGLSGVLATQAAGVAQAYEDKFILDPVAEKEEWCRITGIKK</sequence>
<reference key="1">
    <citation type="journal article" date="2007" name="PLoS Genet.">
        <title>The complete genome sequence of Yersinia pseudotuberculosis IP31758, the causative agent of Far East scarlet-like fever.</title>
        <authorList>
            <person name="Eppinger M."/>
            <person name="Rosovitz M.J."/>
            <person name="Fricke W.F."/>
            <person name="Rasko D.A."/>
            <person name="Kokorina G."/>
            <person name="Fayolle C."/>
            <person name="Lindler L.E."/>
            <person name="Carniel E."/>
            <person name="Ravel J."/>
        </authorList>
    </citation>
    <scope>NUCLEOTIDE SEQUENCE [LARGE SCALE GENOMIC DNA]</scope>
    <source>
        <strain>IP 31758</strain>
    </source>
</reference>
<protein>
    <recommendedName>
        <fullName evidence="1">Ribosomal protein L11 methyltransferase</fullName>
        <shortName evidence="1">L11 Mtase</shortName>
        <ecNumber evidence="1">2.1.1.-</ecNumber>
    </recommendedName>
</protein>
<name>PRMA_YERP3</name>
<organism>
    <name type="scientific">Yersinia pseudotuberculosis serotype O:1b (strain IP 31758)</name>
    <dbReference type="NCBI Taxonomy" id="349747"/>
    <lineage>
        <taxon>Bacteria</taxon>
        <taxon>Pseudomonadati</taxon>
        <taxon>Pseudomonadota</taxon>
        <taxon>Gammaproteobacteria</taxon>
        <taxon>Enterobacterales</taxon>
        <taxon>Yersiniaceae</taxon>
        <taxon>Yersinia</taxon>
    </lineage>
</organism>
<proteinExistence type="inferred from homology"/>
<keyword id="KW-0963">Cytoplasm</keyword>
<keyword id="KW-0489">Methyltransferase</keyword>
<keyword id="KW-0949">S-adenosyl-L-methionine</keyword>
<keyword id="KW-0808">Transferase</keyword>
<dbReference type="EC" id="2.1.1.-" evidence="1"/>
<dbReference type="EMBL" id="CP000720">
    <property type="protein sequence ID" value="ABS48296.1"/>
    <property type="molecule type" value="Genomic_DNA"/>
</dbReference>
<dbReference type="RefSeq" id="WP_002220963.1">
    <property type="nucleotide sequence ID" value="NC_009708.1"/>
</dbReference>
<dbReference type="SMR" id="A7FDQ3"/>
<dbReference type="GeneID" id="57975080"/>
<dbReference type="KEGG" id="ypi:YpsIP31758_0388"/>
<dbReference type="HOGENOM" id="CLU_049382_4_1_6"/>
<dbReference type="Proteomes" id="UP000002412">
    <property type="component" value="Chromosome"/>
</dbReference>
<dbReference type="GO" id="GO:0005829">
    <property type="term" value="C:cytosol"/>
    <property type="evidence" value="ECO:0007669"/>
    <property type="project" value="TreeGrafter"/>
</dbReference>
<dbReference type="GO" id="GO:0016279">
    <property type="term" value="F:protein-lysine N-methyltransferase activity"/>
    <property type="evidence" value="ECO:0007669"/>
    <property type="project" value="TreeGrafter"/>
</dbReference>
<dbReference type="GO" id="GO:0032259">
    <property type="term" value="P:methylation"/>
    <property type="evidence" value="ECO:0007669"/>
    <property type="project" value="UniProtKB-KW"/>
</dbReference>
<dbReference type="CDD" id="cd02440">
    <property type="entry name" value="AdoMet_MTases"/>
    <property type="match status" value="1"/>
</dbReference>
<dbReference type="Gene3D" id="3.40.50.150">
    <property type="entry name" value="Vaccinia Virus protein VP39"/>
    <property type="match status" value="1"/>
</dbReference>
<dbReference type="HAMAP" id="MF_00735">
    <property type="entry name" value="Methyltr_PrmA"/>
    <property type="match status" value="1"/>
</dbReference>
<dbReference type="InterPro" id="IPR050078">
    <property type="entry name" value="Ribosomal_L11_MeTrfase_PrmA"/>
</dbReference>
<dbReference type="InterPro" id="IPR004498">
    <property type="entry name" value="Ribosomal_PrmA_MeTrfase"/>
</dbReference>
<dbReference type="InterPro" id="IPR029063">
    <property type="entry name" value="SAM-dependent_MTases_sf"/>
</dbReference>
<dbReference type="NCBIfam" id="TIGR00406">
    <property type="entry name" value="prmA"/>
    <property type="match status" value="1"/>
</dbReference>
<dbReference type="PANTHER" id="PTHR43648">
    <property type="entry name" value="ELECTRON TRANSFER FLAVOPROTEIN BETA SUBUNIT LYSINE METHYLTRANSFERASE"/>
    <property type="match status" value="1"/>
</dbReference>
<dbReference type="PANTHER" id="PTHR43648:SF1">
    <property type="entry name" value="ELECTRON TRANSFER FLAVOPROTEIN BETA SUBUNIT LYSINE METHYLTRANSFERASE"/>
    <property type="match status" value="1"/>
</dbReference>
<dbReference type="Pfam" id="PF06325">
    <property type="entry name" value="PrmA"/>
    <property type="match status" value="1"/>
</dbReference>
<dbReference type="PIRSF" id="PIRSF000401">
    <property type="entry name" value="RPL11_MTase"/>
    <property type="match status" value="1"/>
</dbReference>
<dbReference type="SUPFAM" id="SSF53335">
    <property type="entry name" value="S-adenosyl-L-methionine-dependent methyltransferases"/>
    <property type="match status" value="1"/>
</dbReference>
<gene>
    <name evidence="1" type="primary">prmA</name>
    <name type="ordered locus">YpsIP31758_0388</name>
</gene>
<evidence type="ECO:0000255" key="1">
    <source>
        <dbReference type="HAMAP-Rule" id="MF_00735"/>
    </source>
</evidence>
<comment type="function">
    <text evidence="1">Methylates ribosomal protein L11.</text>
</comment>
<comment type="catalytic activity">
    <reaction evidence="1">
        <text>L-lysyl-[protein] + 3 S-adenosyl-L-methionine = N(6),N(6),N(6)-trimethyl-L-lysyl-[protein] + 3 S-adenosyl-L-homocysteine + 3 H(+)</text>
        <dbReference type="Rhea" id="RHEA:54192"/>
        <dbReference type="Rhea" id="RHEA-COMP:9752"/>
        <dbReference type="Rhea" id="RHEA-COMP:13826"/>
        <dbReference type="ChEBI" id="CHEBI:15378"/>
        <dbReference type="ChEBI" id="CHEBI:29969"/>
        <dbReference type="ChEBI" id="CHEBI:57856"/>
        <dbReference type="ChEBI" id="CHEBI:59789"/>
        <dbReference type="ChEBI" id="CHEBI:61961"/>
    </reaction>
</comment>
<comment type="subcellular location">
    <subcellularLocation>
        <location evidence="1">Cytoplasm</location>
    </subcellularLocation>
</comment>
<comment type="similarity">
    <text evidence="1">Belongs to the methyltransferase superfamily. PrmA family.</text>
</comment>